<proteinExistence type="inferred from homology"/>
<protein>
    <recommendedName>
        <fullName evidence="1">L-rhamnose mutarotase</fullName>
        <ecNumber evidence="1">5.1.3.32</ecNumber>
    </recommendedName>
    <alternativeName>
        <fullName evidence="1">Rhamnose 1-epimerase</fullName>
    </alternativeName>
    <alternativeName>
        <fullName evidence="1">Type-3 mutarotase</fullName>
    </alternativeName>
</protein>
<dbReference type="EC" id="5.1.3.32" evidence="1"/>
<dbReference type="EMBL" id="CU928145">
    <property type="protein sequence ID" value="CAV01084.1"/>
    <property type="molecule type" value="Genomic_DNA"/>
</dbReference>
<dbReference type="RefSeq" id="WP_000619503.1">
    <property type="nucleotide sequence ID" value="NC_011748.1"/>
</dbReference>
<dbReference type="SMR" id="B7L9F7"/>
<dbReference type="GeneID" id="93778037"/>
<dbReference type="KEGG" id="eck:EC55989_4379"/>
<dbReference type="HOGENOM" id="CLU_100689_2_0_6"/>
<dbReference type="UniPathway" id="UPA00125"/>
<dbReference type="Proteomes" id="UP000000746">
    <property type="component" value="Chromosome"/>
</dbReference>
<dbReference type="GO" id="GO:0005737">
    <property type="term" value="C:cytoplasm"/>
    <property type="evidence" value="ECO:0007669"/>
    <property type="project" value="UniProtKB-SubCell"/>
</dbReference>
<dbReference type="GO" id="GO:0062192">
    <property type="term" value="F:L-rhamnose mutarotase activity"/>
    <property type="evidence" value="ECO:0007669"/>
    <property type="project" value="UniProtKB-EC"/>
</dbReference>
<dbReference type="GO" id="GO:0019301">
    <property type="term" value="P:rhamnose catabolic process"/>
    <property type="evidence" value="ECO:0007669"/>
    <property type="project" value="TreeGrafter"/>
</dbReference>
<dbReference type="FunFam" id="3.30.70.100:FF:000013">
    <property type="entry name" value="L-rhamnose mutarotase"/>
    <property type="match status" value="1"/>
</dbReference>
<dbReference type="Gene3D" id="3.30.70.100">
    <property type="match status" value="1"/>
</dbReference>
<dbReference type="HAMAP" id="MF_01663">
    <property type="entry name" value="L_rham_rotase"/>
    <property type="match status" value="1"/>
</dbReference>
<dbReference type="InterPro" id="IPR011008">
    <property type="entry name" value="Dimeric_a/b-barrel"/>
</dbReference>
<dbReference type="InterPro" id="IPR013448">
    <property type="entry name" value="L-rhamnose_mutarotase"/>
</dbReference>
<dbReference type="InterPro" id="IPR008000">
    <property type="entry name" value="Rham/fucose_mutarotase"/>
</dbReference>
<dbReference type="NCBIfam" id="TIGR02625">
    <property type="entry name" value="YiiL_rotase"/>
    <property type="match status" value="1"/>
</dbReference>
<dbReference type="PANTHER" id="PTHR34389">
    <property type="entry name" value="L-RHAMNOSE MUTAROTASE"/>
    <property type="match status" value="1"/>
</dbReference>
<dbReference type="PANTHER" id="PTHR34389:SF2">
    <property type="entry name" value="L-RHAMNOSE MUTAROTASE"/>
    <property type="match status" value="1"/>
</dbReference>
<dbReference type="Pfam" id="PF05336">
    <property type="entry name" value="rhaM"/>
    <property type="match status" value="1"/>
</dbReference>
<dbReference type="SUPFAM" id="SSF54909">
    <property type="entry name" value="Dimeric alpha+beta barrel"/>
    <property type="match status" value="1"/>
</dbReference>
<feature type="chain" id="PRO_1000187215" description="L-rhamnose mutarotase">
    <location>
        <begin position="1"/>
        <end position="104"/>
    </location>
</feature>
<feature type="active site" description="Proton donor" evidence="1">
    <location>
        <position position="22"/>
    </location>
</feature>
<feature type="binding site" evidence="1">
    <location>
        <position position="18"/>
    </location>
    <ligand>
        <name>substrate</name>
    </ligand>
</feature>
<feature type="binding site" evidence="1">
    <location>
        <position position="41"/>
    </location>
    <ligand>
        <name>substrate</name>
    </ligand>
</feature>
<feature type="binding site" evidence="1">
    <location>
        <begin position="76"/>
        <end position="77"/>
    </location>
    <ligand>
        <name>substrate</name>
    </ligand>
</feature>
<organism>
    <name type="scientific">Escherichia coli (strain 55989 / EAEC)</name>
    <dbReference type="NCBI Taxonomy" id="585055"/>
    <lineage>
        <taxon>Bacteria</taxon>
        <taxon>Pseudomonadati</taxon>
        <taxon>Pseudomonadota</taxon>
        <taxon>Gammaproteobacteria</taxon>
        <taxon>Enterobacterales</taxon>
        <taxon>Enterobacteriaceae</taxon>
        <taxon>Escherichia</taxon>
    </lineage>
</organism>
<sequence>MIRKAFVMQVNPDAHEEYQRRHNPIWPELEAVLKSHGAHNYAIYLDKARNLLFATVEIESEERWNAVASTDVCQRWWKYMTDVMPANPDNSPVSSELQEVFYLP</sequence>
<comment type="function">
    <text evidence="1">Involved in the anomeric conversion of L-rhamnose.</text>
</comment>
<comment type="catalytic activity">
    <reaction evidence="1">
        <text>alpha-L-rhamnose = beta-L-rhamnose</text>
        <dbReference type="Rhea" id="RHEA:25584"/>
        <dbReference type="ChEBI" id="CHEBI:27586"/>
        <dbReference type="ChEBI" id="CHEBI:27907"/>
        <dbReference type="EC" id="5.1.3.32"/>
    </reaction>
</comment>
<comment type="pathway">
    <text evidence="1">Carbohydrate metabolism; L-rhamnose metabolism.</text>
</comment>
<comment type="subunit">
    <text evidence="1">Homodimer.</text>
</comment>
<comment type="subcellular location">
    <subcellularLocation>
        <location evidence="1">Cytoplasm</location>
    </subcellularLocation>
</comment>
<comment type="similarity">
    <text evidence="1">Belongs to the rhamnose mutarotase family.</text>
</comment>
<name>RHAM_ECO55</name>
<accession>B7L9F7</accession>
<gene>
    <name evidence="1" type="primary">rhaM</name>
    <name type="ordered locus">EC55989_4379</name>
</gene>
<evidence type="ECO:0000255" key="1">
    <source>
        <dbReference type="HAMAP-Rule" id="MF_01663"/>
    </source>
</evidence>
<keyword id="KW-0119">Carbohydrate metabolism</keyword>
<keyword id="KW-0963">Cytoplasm</keyword>
<keyword id="KW-0413">Isomerase</keyword>
<keyword id="KW-1185">Reference proteome</keyword>
<keyword id="KW-0684">Rhamnose metabolism</keyword>
<reference key="1">
    <citation type="journal article" date="2009" name="PLoS Genet.">
        <title>Organised genome dynamics in the Escherichia coli species results in highly diverse adaptive paths.</title>
        <authorList>
            <person name="Touchon M."/>
            <person name="Hoede C."/>
            <person name="Tenaillon O."/>
            <person name="Barbe V."/>
            <person name="Baeriswyl S."/>
            <person name="Bidet P."/>
            <person name="Bingen E."/>
            <person name="Bonacorsi S."/>
            <person name="Bouchier C."/>
            <person name="Bouvet O."/>
            <person name="Calteau A."/>
            <person name="Chiapello H."/>
            <person name="Clermont O."/>
            <person name="Cruveiller S."/>
            <person name="Danchin A."/>
            <person name="Diard M."/>
            <person name="Dossat C."/>
            <person name="Karoui M.E."/>
            <person name="Frapy E."/>
            <person name="Garry L."/>
            <person name="Ghigo J.M."/>
            <person name="Gilles A.M."/>
            <person name="Johnson J."/>
            <person name="Le Bouguenec C."/>
            <person name="Lescat M."/>
            <person name="Mangenot S."/>
            <person name="Martinez-Jehanne V."/>
            <person name="Matic I."/>
            <person name="Nassif X."/>
            <person name="Oztas S."/>
            <person name="Petit M.A."/>
            <person name="Pichon C."/>
            <person name="Rouy Z."/>
            <person name="Ruf C.S."/>
            <person name="Schneider D."/>
            <person name="Tourret J."/>
            <person name="Vacherie B."/>
            <person name="Vallenet D."/>
            <person name="Medigue C."/>
            <person name="Rocha E.P.C."/>
            <person name="Denamur E."/>
        </authorList>
    </citation>
    <scope>NUCLEOTIDE SEQUENCE [LARGE SCALE GENOMIC DNA]</scope>
    <source>
        <strain>55989 / EAEC</strain>
    </source>
</reference>